<keyword id="KW-0002">3D-structure</keyword>
<keyword id="KW-1283">Bacterial microcompartment</keyword>
<keyword id="KW-0120">Carbon dioxide fixation</keyword>
<keyword id="KW-1282">Carboxysome</keyword>
<keyword id="KW-0602">Photosynthesis</keyword>
<keyword id="KW-1185">Reference proteome</keyword>
<name>CCMK4_SYNE7</name>
<sequence>MSQQAIGSLETKGFPPILAAADAMVKAGRITIVSYMRAGSARFAVNIRGDVSEVKTAMDAGIEAAKNTPGGTLETWVIIPRPHENVEAVFPIGFGPEVEQYRLSAEGTGSGRR</sequence>
<gene>
    <name evidence="9" type="primary">ccmK4</name>
    <name type="ordered locus">Synpcc7942_0285</name>
</gene>
<feature type="chain" id="PRO_0000451236" description="Carboxysome shell protein CcmK4">
    <location>
        <begin position="1"/>
        <end position="113"/>
    </location>
</feature>
<feature type="domain" description="BMC" evidence="1">
    <location>
        <begin position="5"/>
        <end position="91"/>
    </location>
</feature>
<feature type="mutagenesis site" description="Probably alters pore properties, is able to form carboxysomes, residues correspond to CcmK2 of this organism." evidence="3">
    <original>MRA</original>
    <variation>EKI</variation>
    <location>
        <begin position="36"/>
        <end position="38"/>
    </location>
</feature>
<feature type="mutagenesis site" description="Does not complement its deletion mutant, forms homohexamers in vitro." evidence="7">
    <original>S</original>
    <variation>D</variation>
    <location>
        <position position="40"/>
    </location>
</feature>
<feature type="strand" evidence="15">
    <location>
        <begin position="3"/>
        <end position="13"/>
    </location>
</feature>
<feature type="helix" evidence="15">
    <location>
        <begin position="14"/>
        <end position="25"/>
    </location>
</feature>
<feature type="strand" evidence="15">
    <location>
        <begin position="31"/>
        <end position="39"/>
    </location>
</feature>
<feature type="strand" evidence="15">
    <location>
        <begin position="42"/>
        <end position="49"/>
    </location>
</feature>
<feature type="helix" evidence="15">
    <location>
        <begin position="51"/>
        <end position="67"/>
    </location>
</feature>
<feature type="strand" evidence="15">
    <location>
        <begin position="72"/>
        <end position="81"/>
    </location>
</feature>
<feature type="helix" evidence="15">
    <location>
        <begin position="84"/>
        <end position="89"/>
    </location>
</feature>
<feature type="helix" evidence="15">
    <location>
        <begin position="96"/>
        <end position="101"/>
    </location>
</feature>
<protein>
    <recommendedName>
        <fullName evidence="9">Carboxysome shell protein CcmK4</fullName>
    </recommendedName>
    <alternativeName>
        <fullName>Carbon dioxide-concentrating mechanism protein CcmK4</fullName>
    </alternativeName>
</protein>
<dbReference type="EMBL" id="CP000100">
    <property type="protein sequence ID" value="ABB56317.1"/>
    <property type="molecule type" value="Genomic_DNA"/>
</dbReference>
<dbReference type="RefSeq" id="WP_011243539.1">
    <property type="nucleotide sequence ID" value="NZ_JACJTX010000002.1"/>
</dbReference>
<dbReference type="PDB" id="4OX6">
    <property type="method" value="X-ray"/>
    <property type="resolution" value="1.34 A"/>
    <property type="chains" value="A/B=1-113"/>
</dbReference>
<dbReference type="PDBsum" id="4OX6"/>
<dbReference type="SMR" id="Q31RK2"/>
<dbReference type="STRING" id="1140.Synpcc7942_0285"/>
<dbReference type="PaxDb" id="1140-Synpcc7942_0285"/>
<dbReference type="KEGG" id="syf:Synpcc7942_0285"/>
<dbReference type="eggNOG" id="COG4577">
    <property type="taxonomic scope" value="Bacteria"/>
</dbReference>
<dbReference type="HOGENOM" id="CLU_064903_5_0_3"/>
<dbReference type="OrthoDB" id="7057533at2"/>
<dbReference type="BioCyc" id="SYNEL:SYNPCC7942_0285-MONOMER"/>
<dbReference type="EvolutionaryTrace" id="Q31RK2"/>
<dbReference type="Proteomes" id="UP000889800">
    <property type="component" value="Chromosome"/>
</dbReference>
<dbReference type="GO" id="GO:0031470">
    <property type="term" value="C:carboxysome"/>
    <property type="evidence" value="ECO:0000314"/>
    <property type="project" value="UniProtKB"/>
</dbReference>
<dbReference type="GO" id="GO:0043886">
    <property type="term" value="F:structural constituent of carboxysome shell"/>
    <property type="evidence" value="ECO:0000315"/>
    <property type="project" value="UniProtKB"/>
</dbReference>
<dbReference type="GO" id="GO:0015977">
    <property type="term" value="P:carbon fixation"/>
    <property type="evidence" value="ECO:0007669"/>
    <property type="project" value="UniProtKB-UniRule"/>
</dbReference>
<dbReference type="GO" id="GO:0015979">
    <property type="term" value="P:photosynthesis"/>
    <property type="evidence" value="ECO:0007669"/>
    <property type="project" value="UniProtKB-KW"/>
</dbReference>
<dbReference type="CDD" id="cd07057">
    <property type="entry name" value="BMC_CcmK"/>
    <property type="match status" value="1"/>
</dbReference>
<dbReference type="Gene3D" id="3.30.70.1710">
    <property type="match status" value="1"/>
</dbReference>
<dbReference type="HAMAP" id="MF_00854">
    <property type="entry name" value="CcmK"/>
    <property type="match status" value="1"/>
</dbReference>
<dbReference type="InterPro" id="IPR020808">
    <property type="entry name" value="Bact_microcomp_CS"/>
</dbReference>
<dbReference type="InterPro" id="IPR000249">
    <property type="entry name" value="BMC_dom"/>
</dbReference>
<dbReference type="InterPro" id="IPR050575">
    <property type="entry name" value="BMC_shell"/>
</dbReference>
<dbReference type="InterPro" id="IPR046380">
    <property type="entry name" value="CcmK"/>
</dbReference>
<dbReference type="InterPro" id="IPR037233">
    <property type="entry name" value="CcmK-like_sf"/>
</dbReference>
<dbReference type="InterPro" id="IPR044872">
    <property type="entry name" value="CcmK/CsoS1_BMC"/>
</dbReference>
<dbReference type="PANTHER" id="PTHR33941:SF13">
    <property type="entry name" value="CARBOXYSOME SHELL PROTEIN CCMK4"/>
    <property type="match status" value="1"/>
</dbReference>
<dbReference type="PANTHER" id="PTHR33941">
    <property type="entry name" value="PROPANEDIOL UTILIZATION PROTEIN PDUA"/>
    <property type="match status" value="1"/>
</dbReference>
<dbReference type="Pfam" id="PF00936">
    <property type="entry name" value="BMC"/>
    <property type="match status" value="1"/>
</dbReference>
<dbReference type="SMART" id="SM00877">
    <property type="entry name" value="BMC"/>
    <property type="match status" value="1"/>
</dbReference>
<dbReference type="SUPFAM" id="SSF143414">
    <property type="entry name" value="CcmK-like"/>
    <property type="match status" value="1"/>
</dbReference>
<dbReference type="PROSITE" id="PS01139">
    <property type="entry name" value="BMC_1"/>
    <property type="match status" value="1"/>
</dbReference>
<dbReference type="PROSITE" id="PS51930">
    <property type="entry name" value="BMC_2"/>
    <property type="match status" value="1"/>
</dbReference>
<organism>
    <name type="scientific">Synechococcus elongatus (strain ATCC 33912 / PCC 7942 / FACHB-805)</name>
    <name type="common">Anacystis nidulans R2</name>
    <dbReference type="NCBI Taxonomy" id="1140"/>
    <lineage>
        <taxon>Bacteria</taxon>
        <taxon>Bacillati</taxon>
        <taxon>Cyanobacteriota</taxon>
        <taxon>Cyanophyceae</taxon>
        <taxon>Synechococcales</taxon>
        <taxon>Synechococcaceae</taxon>
        <taxon>Synechococcus</taxon>
    </lineage>
</organism>
<accession>Q31RK2</accession>
<reference key="1">
    <citation type="submission" date="2005-08" db="EMBL/GenBank/DDBJ databases">
        <title>Complete sequence of chromosome 1 of Synechococcus elongatus PCC 7942.</title>
        <authorList>
            <consortium name="US DOE Joint Genome Institute"/>
            <person name="Copeland A."/>
            <person name="Lucas S."/>
            <person name="Lapidus A."/>
            <person name="Barry K."/>
            <person name="Detter J.C."/>
            <person name="Glavina T."/>
            <person name="Hammon N."/>
            <person name="Israni S."/>
            <person name="Pitluck S."/>
            <person name="Schmutz J."/>
            <person name="Larimer F."/>
            <person name="Land M."/>
            <person name="Kyrpides N."/>
            <person name="Lykidis A."/>
            <person name="Golden S."/>
            <person name="Richardson P."/>
        </authorList>
    </citation>
    <scope>NUCLEOTIDE SEQUENCE [LARGE SCALE GENOMIC DNA]</scope>
    <source>
        <strain>ATCC 33912 / PCC 7942 / FACHB-805</strain>
    </source>
</reference>
<reference key="2">
    <citation type="journal article" date="2012" name="PLoS ONE">
        <title>Structural determinants of the outer shell of beta-carboxysomes in Synechococcus elongatus PCC 7942: roles for CcmK2, K3-K4, CcmO, and CcmL.</title>
        <authorList>
            <person name="Rae B.D."/>
            <person name="Long B.M."/>
            <person name="Badger M.R."/>
            <person name="Price G.D."/>
        </authorList>
    </citation>
    <scope>FUNCTION</scope>
    <scope>DISRUPTION PHENOTYPE</scope>
    <source>
        <strain>ATCC 33912 / PCC 7942 / FACHB-805</strain>
    </source>
</reference>
<reference key="3">
    <citation type="journal article" date="2017" name="Mol. Biol. Cell">
        <title>Superresolution microscopy of the beta-carboxysome reveals a homogeneous matrix.</title>
        <authorList>
            <person name="Niederhuber M.J."/>
            <person name="Lambert T.J."/>
            <person name="Yapp C."/>
            <person name="Silver P.A."/>
            <person name="Polka J.K."/>
        </authorList>
    </citation>
    <scope>SUBCELLULAR LOCATION</scope>
    <source>
        <strain>ATCC 33912 / PCC 7942 / FACHB-805</strain>
    </source>
</reference>
<reference key="4">
    <citation type="journal article" date="2017" name="Nanoscale">
        <title>Direct characterization of the native structure and mechanics of cyanobacterial carboxysomes.</title>
        <authorList>
            <person name="Faulkner M."/>
            <person name="Rodriguez-Ramos J."/>
            <person name="Dykes G.F."/>
            <person name="Owen S.V."/>
            <person name="Casella S."/>
            <person name="Simpson D.M."/>
            <person name="Beynon R.J."/>
            <person name="Liu L.N."/>
        </authorList>
    </citation>
    <scope>SUBCELLULAR LOCATION</scope>
    <source>
        <strain>ATCC 33912 / PCC 7942 / FACHB-805</strain>
    </source>
</reference>
<reference key="5">
    <citation type="journal article" date="2018" name="Front. Plant Sci.">
        <title>Engineering and Modulating Functional Cyanobacterial CO2-Fixing Organelles.</title>
        <authorList>
            <person name="Fang Y."/>
            <person name="Huang F."/>
            <person name="Faulkner M."/>
            <person name="Jiang Q."/>
            <person name="Dykes G.F."/>
            <person name="Yang M."/>
            <person name="Liu L.N."/>
        </authorList>
    </citation>
    <scope>BIOTECHNOLOGY</scope>
    <source>
        <strain>ATCC 33912 / PCC 7942 / FACHB-805</strain>
    </source>
</reference>
<reference key="6">
    <citation type="journal article" date="2019" name="Plant Cell">
        <title>Single-Organelle Quantification Reveals Stoichiometric and Structural Variability of Carboxysomes Dependent on the Environment.</title>
        <authorList>
            <person name="Sun Y."/>
            <person name="Wollman A.J.M."/>
            <person name="Huang F."/>
            <person name="Leake M.C."/>
            <person name="Liu L.N."/>
        </authorList>
    </citation>
    <scope>SUBCELLULAR LOCATION</scope>
    <scope>INDUCTION</scope>
    <source>
        <strain>ATCC 33912 / PCC 7942 / FACHB-805</strain>
    </source>
</reference>
<reference key="7">
    <citation type="journal article" date="2019" name="Plant Physiol.">
        <title>Heterohexamers Formed by CcmK3 and CcmK4 Increase the Complexity of Beta Carboxysome Shells.</title>
        <authorList>
            <person name="Sommer M."/>
            <person name="Sutter M."/>
            <person name="Gupta S."/>
            <person name="Kirst H."/>
            <person name="Turmo A."/>
            <person name="Lechno-Yossef S."/>
            <person name="Burton R.L."/>
            <person name="Saechao C."/>
            <person name="Sloan N.B."/>
            <person name="Cheng X."/>
            <person name="Chan L.G."/>
            <person name="Petzold C.J."/>
            <person name="Fuentes-Cabrera M."/>
            <person name="Ralston C.Y."/>
            <person name="Kerfeld C.A."/>
        </authorList>
    </citation>
    <scope>DISRUPTION PHENOTYPE</scope>
    <scope>MUTAGENESIS OF SER-40</scope>
    <source>
        <strain>ATCC 33912 / PCC 7942 / FACHB-805</strain>
    </source>
</reference>
<reference key="8">
    <citation type="journal article" date="2019" name="PLoS ONE">
        <title>Occurrence and stability of hetero-hexamer associations formed by beta-carboxysome CcmK shell components.</title>
        <authorList>
            <person name="Garcia-Alles L.F."/>
            <person name="Root K."/>
            <person name="Maveyraud L."/>
            <person name="Aubry N."/>
            <person name="Lesniewska E."/>
            <person name="Mourey L."/>
            <person name="Zenobi R."/>
            <person name="Truan G."/>
        </authorList>
    </citation>
    <scope>SUBUNIT</scope>
    <source>
        <strain>ATCC 33912 / PCC 7942 / FACHB-805</strain>
    </source>
</reference>
<reference evidence="14" key="9">
    <citation type="journal article" date="2015" name="ACS Synth. Biol.">
        <title>Engineering bacterial microcompartment shells: chimeric shell proteins and chimeric carboxysome shells.</title>
        <authorList>
            <person name="Cai F."/>
            <person name="Sutter M."/>
            <person name="Bernstein S.L."/>
            <person name="Kinney J.N."/>
            <person name="Kerfeld C.A."/>
        </authorList>
    </citation>
    <scope>X-RAY CRYSTALLOGRAPHY (1.34 ANGSTROMS)</scope>
    <scope>SUBUNIT</scope>
    <scope>SUBCELLULAR LOCATION</scope>
    <scope>DOMAIN</scope>
    <scope>MUTAGENESIS OF 36-MET--ALA-38</scope>
    <source>
        <strain>ATCC 33912 / PCC 7942 / FACHB-805</strain>
    </source>
</reference>
<comment type="function">
    <text evidence="1">One of the shell proteins of the carboxysome, a polyhedral inclusion where RuBisCO (ribulose bisphosphate carboxylase, rbcL-rbcS) is sequestered. Assembles into hexamers which make sheets that form the facets of the polyhedral carboxysome. The hexamer central pore probably regulates metabolite flux.</text>
</comment>
<comment type="function">
    <text evidence="4 10 11 12">A minor shell protein of the carboxysome, a polyhedral inclusion where RuBisCO (ribulose bisphosphate carboxylase, rbcL-rbcS) is sequestered (Probable). Hexamers form sheets that form the facets of the polyhedral carboxysome. The shell is 4.5 nm thick, as observed for CcmK proteins (PubMed:28616951). In PCC 7942 there are several CcmK paralogs with presumably functional differences; replacing the central pore residues (34-37) with those of CcmK2 from this organism (Tyr-Glu-Lys-Ile) allows the bacterium to make carboxysomes, but the expression level is too low to know if the carboxysome is functional for CO(2) fixation (Probable). This subunit probably makes both homohexamers and heterohexamers with CcmK3. The CcmK3-CcmK4 heterohexmers have been suggested to cap other hexamers, perhaps to alter metabolite flux (Probable).</text>
</comment>
<comment type="subunit">
    <text evidence="3 7 13">Homohexamer (PubMed:25117559). Interacts stably with CcmK3, probably forms heterohexamers with a 1:2 CcmK3:CcmK4 stoichiometry (Probable) (PubMed:30389783).</text>
</comment>
<comment type="subcellular location">
    <subcellularLocation>
        <location evidence="1 3 4 5 8">Carboxysome</location>
    </subcellularLocation>
    <text evidence="3 5">This cyanobacterium makes beta-type carboxysomes (PubMed:25117559). Part of the carboxysome shell, not found in the interior (PubMed:28963440).</text>
</comment>
<comment type="induction">
    <text evidence="8">Carboxysome size and components vary with growth conditions. When grown in ambient air at medium light (50 uE meter(-2) second(-1)) there are 52 units of this protein per carboxysome, the numbers are stable under low light and high light, and increase under high CO(2) (at protein level). The CcmK3:CcmK4 ratio of 1:3.8 is stable over all growth conditions.</text>
</comment>
<comment type="domain">
    <text evidence="3">The tight homohexamer forms a pore with an opening of about 5 Angstroms in diameter and is positively charged.</text>
</comment>
<comment type="disruption phenotype">
    <text evidence="2 7">Single deletion has a wild-type phenotype, a double ccmK3-ccmK4 deletion has slightly larger, aggregated instead of spatially separated carboxysomes, and has a photosynthetic affinity for inorganic carbon between wild-type and carboxysome-less strains (PubMed:22928045). In another study single mutant grows slower in air and low light, double ccmK3-ccmK4 mutant has similarly impaired growth rate; ccmK3 does not complement the double deletion, while ccmK4 does (PubMed:30389783).</text>
</comment>
<comment type="biotechnology">
    <text evidence="6">Heterologous expression of 12 carboxysomal genes in E.coli (ccaA, ccmK2, ccmK3, ccmK4, ccmL, ccmM, ccmN, ccmO, ccmP, rbcL, rbcS, rbcX) leads to the formation of bodies that resemble carboxysomes, have densely packed paracrystalline arrays and RuBisCO activity. These structures open the door to generating carboxysomes in plant cells to increase their photosynthesis and productivity, as well as tailoring bacterial microcompartments to specific metabolic needs and molecule delivery. The absence of ccaA, ccmK3, ccmK4, ccmP and rbcX leads to less active RuBisCO.</text>
</comment>
<comment type="similarity">
    <text evidence="1">Belongs to the bacterial microcompartments protein family. CcmK subfamily.</text>
</comment>
<evidence type="ECO:0000255" key="1">
    <source>
        <dbReference type="HAMAP-Rule" id="MF_00854"/>
    </source>
</evidence>
<evidence type="ECO:0000269" key="2">
    <source>
    </source>
</evidence>
<evidence type="ECO:0000269" key="3">
    <source>
    </source>
</evidence>
<evidence type="ECO:0000269" key="4">
    <source>
    </source>
</evidence>
<evidence type="ECO:0000269" key="5">
    <source>
    </source>
</evidence>
<evidence type="ECO:0000269" key="6">
    <source>
    </source>
</evidence>
<evidence type="ECO:0000269" key="7">
    <source>
    </source>
</evidence>
<evidence type="ECO:0000269" key="8">
    <source>
    </source>
</evidence>
<evidence type="ECO:0000303" key="9">
    <source>
    </source>
</evidence>
<evidence type="ECO:0000305" key="10">
    <source>
    </source>
</evidence>
<evidence type="ECO:0000305" key="11">
    <source>
    </source>
</evidence>
<evidence type="ECO:0000305" key="12">
    <source>
    </source>
</evidence>
<evidence type="ECO:0000305" key="13">
    <source>
    </source>
</evidence>
<evidence type="ECO:0007744" key="14">
    <source>
        <dbReference type="PDB" id="4OX6"/>
    </source>
</evidence>
<evidence type="ECO:0007829" key="15">
    <source>
        <dbReference type="PDB" id="4OX6"/>
    </source>
</evidence>
<proteinExistence type="evidence at protein level"/>